<accession>A0A1W5T1U1</accession>
<dbReference type="EC" id="2.3.1.-" evidence="6"/>
<dbReference type="EC" id="6.3.2.-" evidence="6"/>
<dbReference type="EMBL" id="KY764294">
    <property type="protein sequence ID" value="ARF05979.1"/>
    <property type="molecule type" value="Genomic_DNA"/>
</dbReference>
<dbReference type="SMR" id="A0A1W5T1U1"/>
<dbReference type="GO" id="GO:0004315">
    <property type="term" value="F:3-oxoacyl-[acyl-carrier-protein] synthase activity"/>
    <property type="evidence" value="ECO:0007669"/>
    <property type="project" value="InterPro"/>
</dbReference>
<dbReference type="GO" id="GO:0004312">
    <property type="term" value="F:fatty acid synthase activity"/>
    <property type="evidence" value="ECO:0007669"/>
    <property type="project" value="TreeGrafter"/>
</dbReference>
<dbReference type="GO" id="GO:0016874">
    <property type="term" value="F:ligase activity"/>
    <property type="evidence" value="ECO:0007669"/>
    <property type="project" value="UniProtKB-KW"/>
</dbReference>
<dbReference type="GO" id="GO:0008168">
    <property type="term" value="F:methyltransferase activity"/>
    <property type="evidence" value="ECO:0007669"/>
    <property type="project" value="UniProtKB-KW"/>
</dbReference>
<dbReference type="GO" id="GO:0016491">
    <property type="term" value="F:oxidoreductase activity"/>
    <property type="evidence" value="ECO:0007669"/>
    <property type="project" value="UniProtKB-KW"/>
</dbReference>
<dbReference type="GO" id="GO:0031177">
    <property type="term" value="F:phosphopantetheine binding"/>
    <property type="evidence" value="ECO:0007669"/>
    <property type="project" value="InterPro"/>
</dbReference>
<dbReference type="GO" id="GO:0006633">
    <property type="term" value="P:fatty acid biosynthetic process"/>
    <property type="evidence" value="ECO:0007669"/>
    <property type="project" value="InterPro"/>
</dbReference>
<dbReference type="GO" id="GO:1901336">
    <property type="term" value="P:lactone biosynthetic process"/>
    <property type="evidence" value="ECO:0007669"/>
    <property type="project" value="UniProtKB-ARBA"/>
</dbReference>
<dbReference type="GO" id="GO:0032259">
    <property type="term" value="P:methylation"/>
    <property type="evidence" value="ECO:0007669"/>
    <property type="project" value="UniProtKB-KW"/>
</dbReference>
<dbReference type="GO" id="GO:0030639">
    <property type="term" value="P:polyketide biosynthetic process"/>
    <property type="evidence" value="ECO:0007669"/>
    <property type="project" value="UniProtKB-ARBA"/>
</dbReference>
<dbReference type="GO" id="GO:0009403">
    <property type="term" value="P:toxin biosynthetic process"/>
    <property type="evidence" value="ECO:0007669"/>
    <property type="project" value="UniProtKB-ARBA"/>
</dbReference>
<dbReference type="CDD" id="cd05930">
    <property type="entry name" value="A_NRPS"/>
    <property type="match status" value="1"/>
</dbReference>
<dbReference type="CDD" id="cd02440">
    <property type="entry name" value="AdoMet_MTases"/>
    <property type="match status" value="1"/>
</dbReference>
<dbReference type="CDD" id="cd19532">
    <property type="entry name" value="C_PKS-NRPS"/>
    <property type="match status" value="1"/>
</dbReference>
<dbReference type="CDD" id="cd00833">
    <property type="entry name" value="PKS"/>
    <property type="match status" value="1"/>
</dbReference>
<dbReference type="FunFam" id="3.40.47.10:FF:000019">
    <property type="entry name" value="Polyketide synthase type I"/>
    <property type="match status" value="1"/>
</dbReference>
<dbReference type="Gene3D" id="3.30.300.30">
    <property type="match status" value="1"/>
</dbReference>
<dbReference type="Gene3D" id="3.40.47.10">
    <property type="match status" value="1"/>
</dbReference>
<dbReference type="Gene3D" id="1.10.1200.10">
    <property type="entry name" value="ACP-like"/>
    <property type="match status" value="2"/>
</dbReference>
<dbReference type="Gene3D" id="3.30.559.10">
    <property type="entry name" value="Chloramphenicol acetyltransferase-like domain"/>
    <property type="match status" value="1"/>
</dbReference>
<dbReference type="Gene3D" id="3.40.366.10">
    <property type="entry name" value="Malonyl-Coenzyme A Acyl Carrier Protein, domain 2"/>
    <property type="match status" value="1"/>
</dbReference>
<dbReference type="Gene3D" id="3.40.50.12780">
    <property type="entry name" value="N-terminal domain of ligase-like"/>
    <property type="match status" value="1"/>
</dbReference>
<dbReference type="Gene3D" id="3.40.50.720">
    <property type="entry name" value="NAD(P)-binding Rossmann-like Domain"/>
    <property type="match status" value="2"/>
</dbReference>
<dbReference type="Gene3D" id="3.30.559.30">
    <property type="entry name" value="Nonribosomal peptide synthetase, condensation domain"/>
    <property type="match status" value="1"/>
</dbReference>
<dbReference type="Gene3D" id="3.10.129.110">
    <property type="entry name" value="Polyketide synthase dehydratase"/>
    <property type="match status" value="1"/>
</dbReference>
<dbReference type="Gene3D" id="3.40.50.150">
    <property type="entry name" value="Vaccinia Virus protein VP39"/>
    <property type="match status" value="1"/>
</dbReference>
<dbReference type="InterPro" id="IPR001227">
    <property type="entry name" value="Ac_transferase_dom_sf"/>
</dbReference>
<dbReference type="InterPro" id="IPR036736">
    <property type="entry name" value="ACP-like_sf"/>
</dbReference>
<dbReference type="InterPro" id="IPR014043">
    <property type="entry name" value="Acyl_transferase_dom"/>
</dbReference>
<dbReference type="InterPro" id="IPR016035">
    <property type="entry name" value="Acyl_Trfase/lysoPLipase"/>
</dbReference>
<dbReference type="InterPro" id="IPR045851">
    <property type="entry name" value="AMP-bd_C_sf"/>
</dbReference>
<dbReference type="InterPro" id="IPR020845">
    <property type="entry name" value="AMP-binding_CS"/>
</dbReference>
<dbReference type="InterPro" id="IPR000873">
    <property type="entry name" value="AMP-dep_synth/lig_dom"/>
</dbReference>
<dbReference type="InterPro" id="IPR042099">
    <property type="entry name" value="ANL_N_sf"/>
</dbReference>
<dbReference type="InterPro" id="IPR023213">
    <property type="entry name" value="CAT-like_dom_sf"/>
</dbReference>
<dbReference type="InterPro" id="IPR001242">
    <property type="entry name" value="Condensatn"/>
</dbReference>
<dbReference type="InterPro" id="IPR013120">
    <property type="entry name" value="Far_NAD-bd"/>
</dbReference>
<dbReference type="InterPro" id="IPR018201">
    <property type="entry name" value="Ketoacyl_synth_AS"/>
</dbReference>
<dbReference type="InterPro" id="IPR014031">
    <property type="entry name" value="Ketoacyl_synth_C"/>
</dbReference>
<dbReference type="InterPro" id="IPR014030">
    <property type="entry name" value="Ketoacyl_synth_N"/>
</dbReference>
<dbReference type="InterPro" id="IPR016036">
    <property type="entry name" value="Malonyl_transacylase_ACP-bd"/>
</dbReference>
<dbReference type="InterPro" id="IPR013217">
    <property type="entry name" value="Methyltransf_12"/>
</dbReference>
<dbReference type="InterPro" id="IPR036291">
    <property type="entry name" value="NAD(P)-bd_dom_sf"/>
</dbReference>
<dbReference type="InterPro" id="IPR032821">
    <property type="entry name" value="PKS_assoc"/>
</dbReference>
<dbReference type="InterPro" id="IPR020841">
    <property type="entry name" value="PKS_Beta-ketoAc_synthase_dom"/>
</dbReference>
<dbReference type="InterPro" id="IPR042104">
    <property type="entry name" value="PKS_dehydratase_sf"/>
</dbReference>
<dbReference type="InterPro" id="IPR020807">
    <property type="entry name" value="PKS_DH"/>
</dbReference>
<dbReference type="InterPro" id="IPR049551">
    <property type="entry name" value="PKS_DH_C"/>
</dbReference>
<dbReference type="InterPro" id="IPR049552">
    <property type="entry name" value="PKS_DH_N"/>
</dbReference>
<dbReference type="InterPro" id="IPR013968">
    <property type="entry name" value="PKS_KR"/>
</dbReference>
<dbReference type="InterPro" id="IPR049900">
    <property type="entry name" value="PKS_mFAS_DH"/>
</dbReference>
<dbReference type="InterPro" id="IPR050091">
    <property type="entry name" value="PKS_NRPS_Biosynth_Enz"/>
</dbReference>
<dbReference type="InterPro" id="IPR020806">
    <property type="entry name" value="PKS_PP-bd"/>
</dbReference>
<dbReference type="InterPro" id="IPR009081">
    <property type="entry name" value="PP-bd_ACP"/>
</dbReference>
<dbReference type="InterPro" id="IPR006162">
    <property type="entry name" value="Ppantetheine_attach_site"/>
</dbReference>
<dbReference type="InterPro" id="IPR029063">
    <property type="entry name" value="SAM-dependent_MTases_sf"/>
</dbReference>
<dbReference type="InterPro" id="IPR016039">
    <property type="entry name" value="Thiolase-like"/>
</dbReference>
<dbReference type="PANTHER" id="PTHR43775">
    <property type="entry name" value="FATTY ACID SYNTHASE"/>
    <property type="match status" value="1"/>
</dbReference>
<dbReference type="PANTHER" id="PTHR43775:SF20">
    <property type="entry name" value="HYBRID PKS-NRPS SYNTHETASE APDA"/>
    <property type="match status" value="1"/>
</dbReference>
<dbReference type="Pfam" id="PF00698">
    <property type="entry name" value="Acyl_transf_1"/>
    <property type="match status" value="1"/>
</dbReference>
<dbReference type="Pfam" id="PF00501">
    <property type="entry name" value="AMP-binding"/>
    <property type="match status" value="1"/>
</dbReference>
<dbReference type="Pfam" id="PF00668">
    <property type="entry name" value="Condensation"/>
    <property type="match status" value="1"/>
</dbReference>
<dbReference type="Pfam" id="PF16197">
    <property type="entry name" value="KAsynt_C_assoc"/>
    <property type="match status" value="1"/>
</dbReference>
<dbReference type="Pfam" id="PF00109">
    <property type="entry name" value="ketoacyl-synt"/>
    <property type="match status" value="1"/>
</dbReference>
<dbReference type="Pfam" id="PF02801">
    <property type="entry name" value="Ketoacyl-synt_C"/>
    <property type="match status" value="1"/>
</dbReference>
<dbReference type="Pfam" id="PF08659">
    <property type="entry name" value="KR"/>
    <property type="match status" value="1"/>
</dbReference>
<dbReference type="Pfam" id="PF08242">
    <property type="entry name" value="Methyltransf_12"/>
    <property type="match status" value="1"/>
</dbReference>
<dbReference type="Pfam" id="PF07993">
    <property type="entry name" value="NAD_binding_4"/>
    <property type="match status" value="1"/>
</dbReference>
<dbReference type="Pfam" id="PF21089">
    <property type="entry name" value="PKS_DH_N"/>
    <property type="match status" value="1"/>
</dbReference>
<dbReference type="Pfam" id="PF00550">
    <property type="entry name" value="PP-binding"/>
    <property type="match status" value="1"/>
</dbReference>
<dbReference type="Pfam" id="PF14765">
    <property type="entry name" value="PS-DH"/>
    <property type="match status" value="1"/>
</dbReference>
<dbReference type="SMART" id="SM00827">
    <property type="entry name" value="PKS_AT"/>
    <property type="match status" value="1"/>
</dbReference>
<dbReference type="SMART" id="SM00826">
    <property type="entry name" value="PKS_DH"/>
    <property type="match status" value="1"/>
</dbReference>
<dbReference type="SMART" id="SM00822">
    <property type="entry name" value="PKS_KR"/>
    <property type="match status" value="1"/>
</dbReference>
<dbReference type="SMART" id="SM00825">
    <property type="entry name" value="PKS_KS"/>
    <property type="match status" value="1"/>
</dbReference>
<dbReference type="SMART" id="SM00823">
    <property type="entry name" value="PKS_PP"/>
    <property type="match status" value="1"/>
</dbReference>
<dbReference type="SUPFAM" id="SSF56801">
    <property type="entry name" value="Acetyl-CoA synthetase-like"/>
    <property type="match status" value="1"/>
</dbReference>
<dbReference type="SUPFAM" id="SSF47336">
    <property type="entry name" value="ACP-like"/>
    <property type="match status" value="2"/>
</dbReference>
<dbReference type="SUPFAM" id="SSF52777">
    <property type="entry name" value="CoA-dependent acyltransferases"/>
    <property type="match status" value="2"/>
</dbReference>
<dbReference type="SUPFAM" id="SSF52151">
    <property type="entry name" value="FabD/lysophospholipase-like"/>
    <property type="match status" value="1"/>
</dbReference>
<dbReference type="SUPFAM" id="SSF51735">
    <property type="entry name" value="NAD(P)-binding Rossmann-fold domains"/>
    <property type="match status" value="2"/>
</dbReference>
<dbReference type="SUPFAM" id="SSF55048">
    <property type="entry name" value="Probable ACP-binding domain of malonyl-CoA ACP transacylase"/>
    <property type="match status" value="1"/>
</dbReference>
<dbReference type="SUPFAM" id="SSF53335">
    <property type="entry name" value="S-adenosyl-L-methionine-dependent methyltransferases"/>
    <property type="match status" value="1"/>
</dbReference>
<dbReference type="SUPFAM" id="SSF53901">
    <property type="entry name" value="Thiolase-like"/>
    <property type="match status" value="1"/>
</dbReference>
<dbReference type="PROSITE" id="PS00455">
    <property type="entry name" value="AMP_BINDING"/>
    <property type="match status" value="1"/>
</dbReference>
<dbReference type="PROSITE" id="PS50075">
    <property type="entry name" value="CARRIER"/>
    <property type="match status" value="2"/>
</dbReference>
<dbReference type="PROSITE" id="PS00606">
    <property type="entry name" value="KS3_1"/>
    <property type="match status" value="1"/>
</dbReference>
<dbReference type="PROSITE" id="PS52004">
    <property type="entry name" value="KS3_2"/>
    <property type="match status" value="1"/>
</dbReference>
<dbReference type="PROSITE" id="PS00012">
    <property type="entry name" value="PHOSPHOPANTETHEINE"/>
    <property type="match status" value="1"/>
</dbReference>
<dbReference type="PROSITE" id="PS52019">
    <property type="entry name" value="PKS_MFAS_DH"/>
    <property type="match status" value="1"/>
</dbReference>
<keyword id="KW-0436">Ligase</keyword>
<keyword id="KW-0489">Methyltransferase</keyword>
<keyword id="KW-0511">Multifunctional enzyme</keyword>
<keyword id="KW-0560">Oxidoreductase</keyword>
<keyword id="KW-0596">Phosphopantetheine</keyword>
<keyword id="KW-0597">Phosphoprotein</keyword>
<keyword id="KW-0677">Repeat</keyword>
<keyword id="KW-0808">Transferase</keyword>
<sequence length="4080" mass="447924">MAPSQAPREPIAIVGSGCRFPGESSSPSKLWELLQAPRDVQTEIPPTRFNPHGFYHPDNLHHGTSNVRHSYLLTEDHRHFDAQFFGIKPAEAHCIDPQQRLLMETVYESLESAGLRLEDLRGSETAVYVGLMCGDYADIVLRDPESFPMYLSTGTARSIMSNRISYFFDWHGPSMTIDTACSSSLVAVHEAVQTLRLGRSRVAVAAGSNLCLSPEPYIAESKLQMLSPTGRSRMWDIQADGYARGDGVAAVVLKTLSAALADGDHIECLIRETSVNQDGRTRGITMPSSEAQTRLIQDTYARAGLDPLKPQERCQYFEAHGTGTPTGDPLEAAAIRQAFFPGDNNQDRGCLFVGSIKTVVGHTEGTAGLAGVLKASLALRNGIIPPNLLFNQLNPKIKPFYTNLEIATAAKPWPVLPAGVPRRASVNSFGFGGTNAHAIIEAYEPALTAPSKSTEPDIAFIPFVFSAASESALRRMLELYAQHLSKNPTINARDLGWTLQARRSRFPFSIAVPGATTDQLRSNLETRLNSTDARQPLKIVKQESRPENPRILGVFTGQGAQWATMGRALYQSPKVRQIIQELDASLQALPVGERPSWTLASELTADASVSRIKAAEISQPMCTAVQVVLVQLLQSAGVVFDAVVGHSSGEIAAAYAAGFLSGTDAIRIAYYRGLCARLAQGAHGEKGAMMAVGTGVEDALELCAEPEFRGRMSVAAVNSSASVTLSGDADAITQAKEILDEEKKFARVLVVDKAYHSHHMQACSGRYLSCLAKARIAVSAPTDTKCVWYSTVRQGPVTEADLADLTGPYWNDNMVSPVLFAQAVETALAARGPFNMAVEVGPHPALRGPAQQTVQDVLETSLPYTPTLQRGMNDVEAMAECLGLLWQGLAPGFVDLSSYDAFLSQGAVSRVIKDLPRYSWDHDRVFWYESRVSRATRQRIAASHPILGTRCPDGVEQEFRWRNFLSLKELPWLTGHRIQGQIIFPGAGYISAAVDSARAMSSNESIQLVELQELLIRQAIVFEDENASVEILVSITDVTHHSKDMVRAQFSFYSAVGKESTQMTLNASGRLVITYGPVRKDALPVQRPSLVDMVDVPSERFYNALDPLGYSYTGRFRALKSMQRKLGIATGLVTRQEAADLSSVTLDPAMLDAAIQAVLLAKSFPGDGELWCSQVPKVIHRIAVNPTLCDPSGNGVESTFPLDAVLTMMKASDTQGDVDVYSADGQYTMIRMEGIHAVPLEATNADRDRPFFSGVVWGPAAPDSQTVNFDATATPEEYELAYVLERVATFYLRKIHLAFPMDHSARHEGPYVGLLNYATYVTQQVASGYHRYTQPHWARDTVAVIKSESQRFPNNIDLAVMHIIGEHMVDVISTRATILEHLTKDNLLSRYYEQAMGIGHFSDYLASVVEQIVHRYPQMKVLEIGAGTGMATKKVIQRVGHSFGSYTFTDISSGFFENAREIFASHQDQMVYKVLDAEKDPVAQGFGEQSYDLIVASFVLHATSHLETTLHNLRRLLKPGGYVVMLEVTNLEQSRLGYIFGSLPGWWLGANDGRILSPCVPTEEWDRLLKLTGFSGVDTFTSDADALPYPASAIVSQAVDETVDFLRNPLGTPSDFVNRATPVVLIGGASSSVRVIRDVVKRHLDTRFDQVQVVDRLSDFVAISPAVSNGLLTLNLSDLEEPVFQNMTADSLAALKLLYERSNYVLWVTEDARAGNPHQNQSLGFGRSMMVEMPHVQSQFLDLDRITETSSVASRIVDAALRFVGVNMPDRGGDVASAGLLWSTEPEIAVIGGRELLPRIKLNRSQNLRYNASRRAIAEDVDMDQKSVQLVRNGNAYVLEQGSTSGFGNQTPGYTRIRVDVSSLKSLHLGRGNALYLVAGTVLATGEKVIGFADKNSSIVDIPPSWMSHRPDISMAALILSIIARLFSRAILSSISPGGVLVVAEPDELLAPVLEWQASQQKIRVVFVTTQEDAPERPNWVVLHSQVHVRSLPKLAPTEPVTILDLSTGEEPSALALKLRNSLHPASAFERLTYWFSDHARRGEIHIPAEAMLTMYRPPMSPPASDSVIASHSFPVTDVSQIPAARCPLAVVDWQSTSHVPALIRPVDHYPMLKSNKTYWLVGLTGSLGLSLCAWMIHQGAQNVVLTSRNPKIDQIILQELRSLGARVEVYAGDVTNQESLRGVYDRICQTLPPVAGVGQGAMVLIDTMIKDMEIDAMQSVLQPKVKGSINLDELFSAERPLDFFIFFSSATCVTGNIGQSNYAAANMFMTGLAANRNRRGLAGSVMNIGAIMGVGYVTRETSEALQRNLLKSGHVWMSEQDFHTIFAEAILAGTPGSDANVEITCGLRITNASEEQRPLWSFNPRFQHLVVMEEQVEETYEQDKKGMSLKLQLREARTTDEIYEVIKECFIVKLQIMLGLDDAATNSITSKAADDLGIDSLNTVEIRSWFLKEMKVDIPVLRILGGATIGEIIKFVLEKLPSDMTPSLGLSPPTGAASKATSQPNPKPKVVVERRNVPRLEKKIVHSAGSRTSSSVTGTSKSVSPARSMDTASSQTSEAASPSIHTEEITKPLKPLAPLLKADVVSSNLGKVITPVEQTAALSVRKEPLSFGQSRFWFLKLYLEDQTTFNITCLLRMTGPLSVDSLSRAVTAVGQRHEALRTCFTVEDGQSPVQTILPESTLKLERQEYRTMADVNTATKKLTQHVYEMESGRLMRVILLSSAPNSSVHYVLVGYHHINMDGVSLEVFLHDLEKAYRGQPLSSDLLQYPDYAAKQRQERNQGAWQDDLTFWKNEMVGSNLEIPLLPLASVAIRKPLTQYRHHRVEQRLDARLGAQIRQLCQSIKATPSHFYLATFTTLLARLTRTREIWVGMADANRIQAETADSIGNYLNLLALRMQYDPDQPFVASVQAARKKSYGALAHSRIPFDVLLSELQVPRSSTHSPLFQVFMDYRHDVREKRMFGDCQLEGVEYEMGRTAYDIALDVVDTADDGPLIIMGLQESLYSPDTAQMLLNSFLEMVRAFAQDSKQPGGHVSLFSASDLEKALALGNGSVVASQWPATLSHRIDDMAKQYPQKLALNDGDNLRLTFQQMSQRADSIASALLSANVSRQQRVAVFQHPSSDCICSILAILRIGATYVPLDLRLELARLRSIVQDCEPTVFLVDSHTQSQAPDLMLTRPAMTINIADLPRIAPFPVMNRAAAEDEAVILYTSGSTGNPKGVPLTHENLRVNIEGNQAEFQFGPDDCLLQQIAFSFDFSVWQIFMALANGASLFIAPSTHRGDPVALMDLVVREDITITGATPSEYRSWFQHGDLARLKTSQWKTAVSAGEAMTTNMIRDFQALNKSDLRLVNGYGPTEASMSSNKLVVPYLTNKDHPEEWMEKGAVVAGYTAPNYSIYIVDEAMNLLPIGLPGQILIGGPGIASGYLNNKELSCIRFINDKYASPEQRACGWRWAHLTGDRGRIGADGRLRIEGRIEGDTQVKLRGYRIDLQDVEAAMLKASPGAFKDLVVSLHQATQALVAHVVFSQHYPAHKHSQALEIKSLELPRYMWPARTVSIDQMPVTVHGKLDRKALQTMDLPAIEPMKQTSTAHLNEAQAQMVQLWEEVISKDILAAHHIVAESDFFAVGGTSMLLVDLQRQIKSWFKMEIALAELFSANTLEKMALLIKPQEDIATPAAVDAAPPSSPSPLALTASLPPAPTTINWSEEVQLPRVLREQTSSGTTVSVPEKTSGLRLVLTGATGFIGQALLQQLTANPAISTVHCIAVRDPSAIPAHEKILVHAGDLTHAALGLAPVEAQAIFREVDAVIHNGADVSFMKSYHSLRRTNVESTIALIQNSLSRQIPFHYISSSGIANLAGTTTFAEVSAASFIPPTDGSQGYLATKWVSERLLEEAHREFGLPVYIHRPSSVTGSNAPPLDLMDNLMTYARRLKAVPMPERSSWKGYLDFVPVEQVVRDVTGDVLSAAGTVPSARASKVHYIHHLGRQVSLTGLHRYLERETGAVYRVLKMGEWLEEATQVGMDALLRTYLESMDKEDVKVVFPRLVAGKRHASTVGVAKGVKIGESWLEKGKTLLFSW</sequence>
<proteinExistence type="evidence at transcript level"/>
<protein>
    <recommendedName>
        <fullName evidence="7">Hybrid PKS-NRPS synthetase poxE</fullName>
        <shortName evidence="7">PKS-NRPS</shortName>
        <ecNumber evidence="6">2.3.1.-</ecNumber>
        <ecNumber evidence="6">6.3.2.-</ecNumber>
    </recommendedName>
    <alternativeName>
        <fullName evidence="7">Oxaleimides biosynthesis cluster protein E</fullName>
    </alternativeName>
</protein>
<comment type="function">
    <text evidence="6 10">Hybrid PKS-NRPS synthetase; part of the gene cluster that mediates the biosynthesis of oxaleimides, cytotoxic compounds containing an unusual disubstituted succinimide moiety (PubMed:28365998). The first step of the pathway is provided by the HR-PKS poxF that serves in a new mode of collaborative biosynthesis with the PKS-NRPS poxE, by providing the olefin containing amino acid substrate via the synthesis of an ACP-bound dec-4-enoate (PubMed:28365998). The cytochrome P450 monooxygenase poxM-catalyzed oxidation at the alpha-position creates the enzyme-bound 2-hydroxydec-4-enoyl-ACP thioester, which may be prone to spontaneous hydrolysis to yield 2-hydroxydec-4-enoic acid due to increased electrophilicity of the carbonyl (PubMed:28365998). 2-hydroxydec-4-enoic acid can then be further oxidized by poxM to yield the alpha-ketoacid 2-oxodec-4-enoicacid, which is reductively aminated by the aminotransferase poxL to yield (S,E)-2-aminodec-4-enoic acid (PubMed:28365998). The Hybrid PKS-NRPS synthetase poxE then performs condensation between the octaketide product of its PKS modules and the amino group of (S,E)-2-aminodec-4-enoic acid which is activated and incorporated by the adenylation domain (PubMed:28365998). The resulting aminoacyl product can be cyclized by the Diels-Alderase PoxQ and reductively released by the reductive (R) domain of poxE to yield an aldehyde intermediate (Probable) (PubMed:28365998). The released aldehyde is then substrate for a Knoevenagel condensation by the hydrolyase poxO followed by an oxidation at the 5-position of the pyrrolidone ring (PubMed:28365998). The presence of the olefin from the amino acid building block allows for migration of the substituted allyl group to occur (PubMed:28365998). This allylic transposition reaction takes place in a conjugate addition, semipinacol-like fashion to yield a succinimide intermediate (PubMed:28365998). Iterative two-electron oxidations of the C7 methyl of the succinimide intermediate to the carboxylic acid can be catalyzed by one of two remaining cytochrome P450 monooxygenasess poxC or poxD to yield oxaleimide A (PubMed:28365998). Subsequent oxidation yields the maleimide scaffold oxaleimide I (PubMed:28365998). Both oxaleimide A and oxaleimide I can undergo oxidative modifications in the decalin ring to yield the series of products oxaleimides B to H (PubMed:28365998).</text>
</comment>
<comment type="pathway">
    <text evidence="6">Secondary metabolite biosynthesis.</text>
</comment>
<comment type="induction">
    <text evidence="6">Expression is positively regulated by the oxaleimides biosynthesis cluster-specific transcription factor poxB.</text>
</comment>
<comment type="domain">
    <text evidence="6">PoxE has the following domain architecture: KS-MAT-DH-MT-KR-ACP-C-A-T-R. The PKS module (domains KS to ACP) is responsible for the biosynthesis of the octaketide chain and catalyzes Claisen condensations, as well as beta-keto processing and methylation. The downstream NRPS module contains the condensation (C), adenylation (A), and thiolation (T) domains and catalyzes the formation of the amide linkage between the octaketide and the (S,E)-2-aminodec-4-enoic acid produced by the polyketide synthase poxF. The bimodular assembly line is terminated with a putative reductase (R) domain that facilitates formation and release of the poxE product.</text>
</comment>
<comment type="disruption phenotype">
    <text evidence="6">Impairs the productin of oxaleimides.</text>
</comment>
<comment type="similarity">
    <text evidence="8">In the C-terminal section; belongs to the NRP synthetase family.</text>
</comment>
<gene>
    <name evidence="7" type="primary">poxE</name>
</gene>
<reference key="1">
    <citation type="journal article" date="2017" name="J. Am. Chem. Soc.">
        <title>Collaborative Biosynthesis of Maleimide- and Succinimide-Containing Natural Products by Fungal Polyketide Megasynthases.</title>
        <authorList>
            <person name="Sato M."/>
            <person name="Dander J.E."/>
            <person name="Sato C."/>
            <person name="Hung Y.S."/>
            <person name="Gao S.S."/>
            <person name="Tang M.C."/>
            <person name="Hang L."/>
            <person name="Winter J.M."/>
            <person name="Garg N.K."/>
            <person name="Watanabe K."/>
            <person name="Tang Y."/>
        </authorList>
    </citation>
    <scope>NUCLEOTIDE SEQUENCE [GENOMIC DNA]</scope>
    <scope>FUNCTION</scope>
    <scope>DISRUPTION PHENOTYPE</scope>
    <scope>INDUCTION</scope>
    <scope>PATHWAY</scope>
    <source>
        <strain>K85</strain>
    </source>
</reference>
<reference key="2">
    <citation type="journal article" date="2020" name="Chem. Commun. (Camb.)">
        <title>Evidence for enzyme catalysed intramolecular [4+2] Diels-Alder cyclization during the biosynthesis of pyrichalasin H.</title>
        <authorList>
            <person name="Hantke V."/>
            <person name="Skellam E.J."/>
            <person name="Cox R.J."/>
        </authorList>
    </citation>
    <scope>FUNCTION</scope>
</reference>
<organism>
    <name type="scientific">Penicillium oxalicum</name>
    <dbReference type="NCBI Taxonomy" id="69781"/>
    <lineage>
        <taxon>Eukaryota</taxon>
        <taxon>Fungi</taxon>
        <taxon>Dikarya</taxon>
        <taxon>Ascomycota</taxon>
        <taxon>Pezizomycotina</taxon>
        <taxon>Eurotiomycetes</taxon>
        <taxon>Eurotiomycetidae</taxon>
        <taxon>Eurotiales</taxon>
        <taxon>Aspergillaceae</taxon>
        <taxon>Penicillium</taxon>
    </lineage>
</organism>
<name>POXE_PENOX</name>
<feature type="chain" id="PRO_0000453753" description="Hybrid PKS-NRPS synthetase poxE">
    <location>
        <begin position="1"/>
        <end position="4080"/>
    </location>
</feature>
<feature type="domain" description="Ketosynthase family 3 (KS3)" evidence="3 9">
    <location>
        <begin position="8"/>
        <end position="442"/>
    </location>
</feature>
<feature type="domain" description="PKS/mFAS DH" evidence="4">
    <location>
        <begin position="944"/>
        <end position="1246"/>
    </location>
</feature>
<feature type="domain" description="Carrier 1" evidence="2">
    <location>
        <begin position="2405"/>
        <end position="2481"/>
    </location>
</feature>
<feature type="domain" description="Carrier 2" evidence="2">
    <location>
        <begin position="3593"/>
        <end position="3673"/>
    </location>
</feature>
<feature type="region of interest" description="Malonyl-CoA:ACP transacylase (MAT) domain" evidence="1 9">
    <location>
        <begin position="554"/>
        <end position="878"/>
    </location>
</feature>
<feature type="region of interest" description="N-terminal hotdog fold" evidence="4">
    <location>
        <begin position="944"/>
        <end position="1078"/>
    </location>
</feature>
<feature type="region of interest" description="Dehydratase (DH) domain" evidence="1 9">
    <location>
        <begin position="945"/>
        <end position="1243"/>
    </location>
</feature>
<feature type="region of interest" description="C-terminal hotdog fold" evidence="4">
    <location>
        <begin position="1093"/>
        <end position="1246"/>
    </location>
</feature>
<feature type="region of interest" description="Methyltransferase (MT) domain" evidence="1 9">
    <location>
        <begin position="1400"/>
        <end position="1585"/>
    </location>
</feature>
<feature type="region of interest" description="Ketoreductase (KR)domain" evidence="1 9">
    <location>
        <begin position="2118"/>
        <end position="2292"/>
    </location>
</feature>
<feature type="region of interest" description="Peptidyl carrier protein" evidence="1 9">
    <location>
        <begin position="2399"/>
        <end position="2478"/>
    </location>
</feature>
<feature type="region of interest" description="Disordered" evidence="5">
    <location>
        <begin position="2488"/>
        <end position="2569"/>
    </location>
</feature>
<feature type="region of interest" description="Condensation" evidence="1 9">
    <location>
        <begin position="2607"/>
        <end position="3036"/>
    </location>
</feature>
<feature type="region of interest" description="Adenylation" evidence="1 9">
    <location>
        <begin position="3069"/>
        <end position="3478"/>
    </location>
</feature>
<feature type="region of interest" description="Thiolation" evidence="1 9">
    <location>
        <begin position="3598"/>
        <end position="3670"/>
    </location>
</feature>
<feature type="region of interest" description="Reductase (RED) domain" evidence="1 9">
    <location>
        <begin position="3740"/>
        <end position="3959"/>
    </location>
</feature>
<feature type="compositionally biased region" description="Basic and acidic residues" evidence="5">
    <location>
        <begin position="2511"/>
        <end position="2525"/>
    </location>
</feature>
<feature type="compositionally biased region" description="Low complexity" evidence="5">
    <location>
        <begin position="2528"/>
        <end position="2545"/>
    </location>
</feature>
<feature type="compositionally biased region" description="Polar residues" evidence="5">
    <location>
        <begin position="2551"/>
        <end position="2565"/>
    </location>
</feature>
<feature type="active site" description="For beta-ketoacyl synthase activity" evidence="3">
    <location>
        <position position="181"/>
    </location>
</feature>
<feature type="active site" description="For beta-ketoacyl synthase activity" evidence="3">
    <location>
        <position position="320"/>
    </location>
</feature>
<feature type="active site" description="For beta-ketoacyl synthase activity" evidence="3">
    <location>
        <position position="362"/>
    </location>
</feature>
<feature type="active site" description="Proton acceptor; for dehydratase activity" evidence="4">
    <location>
        <position position="976"/>
    </location>
</feature>
<feature type="active site" description="Proton donor; for dehydratase activity" evidence="4">
    <location>
        <position position="1152"/>
    </location>
</feature>
<feature type="modified residue" description="O-(pantetheine 4'-phosphoryl)serine" evidence="2">
    <location>
        <position position="2441"/>
    </location>
</feature>
<feature type="modified residue" description="O-(pantetheine 4'-phosphoryl)serine" evidence="2">
    <location>
        <position position="3633"/>
    </location>
</feature>
<evidence type="ECO:0000255" key="1"/>
<evidence type="ECO:0000255" key="2">
    <source>
        <dbReference type="PROSITE-ProRule" id="PRU00258"/>
    </source>
</evidence>
<evidence type="ECO:0000255" key="3">
    <source>
        <dbReference type="PROSITE-ProRule" id="PRU01348"/>
    </source>
</evidence>
<evidence type="ECO:0000255" key="4">
    <source>
        <dbReference type="PROSITE-ProRule" id="PRU01363"/>
    </source>
</evidence>
<evidence type="ECO:0000256" key="5">
    <source>
        <dbReference type="SAM" id="MobiDB-lite"/>
    </source>
</evidence>
<evidence type="ECO:0000269" key="6">
    <source>
    </source>
</evidence>
<evidence type="ECO:0000303" key="7">
    <source>
    </source>
</evidence>
<evidence type="ECO:0000305" key="8"/>
<evidence type="ECO:0000305" key="9">
    <source>
    </source>
</evidence>
<evidence type="ECO:0000305" key="10">
    <source>
    </source>
</evidence>